<gene>
    <name evidence="1" type="primary">pcrB</name>
    <name type="ordered locus">GTNG_0254</name>
</gene>
<keyword id="KW-0444">Lipid biosynthesis</keyword>
<keyword id="KW-0443">Lipid metabolism</keyword>
<keyword id="KW-0460">Magnesium</keyword>
<keyword id="KW-0479">Metal-binding</keyword>
<keyword id="KW-0594">Phospholipid biosynthesis</keyword>
<keyword id="KW-1208">Phospholipid metabolism</keyword>
<keyword id="KW-0808">Transferase</keyword>
<sequence>MEEIRAWRHVFKLDPNKPIDDERLERLCESGTDAVIVGGTDGVTLDGVLDLLARIRRFSVPCALEVTDIEALTPGFDAYLIPMVLNSCRVDWVIGRHHEAVKQYGDVMNWDEIFAEGYCILNGECKAAKLTEANTALDDDDVVAYARLAEHLYKLPIFYLEYSGTYGNPSLVEKVKRALSRTQLVYGGGIMTPEQAAEMARYADTVVVGNAVYDSFESALATVEAVKRIDGENEISGVK</sequence>
<proteinExistence type="inferred from homology"/>
<feature type="chain" id="PRO_0000304181" description="Heptaprenylglyceryl phosphate synthase">
    <location>
        <begin position="1"/>
        <end position="239"/>
    </location>
</feature>
<feature type="binding site" evidence="1">
    <location>
        <position position="12"/>
    </location>
    <ligand>
        <name>sn-glycerol 1-phosphate</name>
        <dbReference type="ChEBI" id="CHEBI:57685"/>
    </ligand>
</feature>
<feature type="binding site" evidence="1">
    <location>
        <position position="14"/>
    </location>
    <ligand>
        <name>Mg(2+)</name>
        <dbReference type="ChEBI" id="CHEBI:18420"/>
    </ligand>
</feature>
<feature type="binding site" evidence="1">
    <location>
        <position position="40"/>
    </location>
    <ligand>
        <name>Mg(2+)</name>
        <dbReference type="ChEBI" id="CHEBI:18420"/>
    </ligand>
</feature>
<feature type="binding site" evidence="1">
    <location>
        <begin position="159"/>
        <end position="164"/>
    </location>
    <ligand>
        <name>sn-glycerol 1-phosphate</name>
        <dbReference type="ChEBI" id="CHEBI:57685"/>
    </ligand>
</feature>
<feature type="binding site" evidence="1">
    <location>
        <position position="189"/>
    </location>
    <ligand>
        <name>sn-glycerol 1-phosphate</name>
        <dbReference type="ChEBI" id="CHEBI:57685"/>
    </ligand>
</feature>
<feature type="binding site" evidence="1">
    <location>
        <begin position="209"/>
        <end position="210"/>
    </location>
    <ligand>
        <name>sn-glycerol 1-phosphate</name>
        <dbReference type="ChEBI" id="CHEBI:57685"/>
    </ligand>
</feature>
<organism>
    <name type="scientific">Geobacillus thermodenitrificans (strain NG80-2)</name>
    <dbReference type="NCBI Taxonomy" id="420246"/>
    <lineage>
        <taxon>Bacteria</taxon>
        <taxon>Bacillati</taxon>
        <taxon>Bacillota</taxon>
        <taxon>Bacilli</taxon>
        <taxon>Bacillales</taxon>
        <taxon>Anoxybacillaceae</taxon>
        <taxon>Geobacillus</taxon>
    </lineage>
</organism>
<evidence type="ECO:0000255" key="1">
    <source>
        <dbReference type="HAMAP-Rule" id="MF_00112"/>
    </source>
</evidence>
<protein>
    <recommendedName>
        <fullName evidence="1">Heptaprenylglyceryl phosphate synthase</fullName>
        <shortName evidence="1">HepGP synthase</shortName>
        <ecNumber evidence="1">2.5.1.n9</ecNumber>
    </recommendedName>
    <alternativeName>
        <fullName evidence="1">Glycerol-1-phosphate heptaprenyltransferase</fullName>
    </alternativeName>
</protein>
<reference key="1">
    <citation type="journal article" date="2007" name="Proc. Natl. Acad. Sci. U.S.A.">
        <title>Genome and proteome of long-chain alkane degrading Geobacillus thermodenitrificans NG80-2 isolated from a deep-subsurface oil reservoir.</title>
        <authorList>
            <person name="Feng L."/>
            <person name="Wang W."/>
            <person name="Cheng J."/>
            <person name="Ren Y."/>
            <person name="Zhao G."/>
            <person name="Gao C."/>
            <person name="Tang Y."/>
            <person name="Liu X."/>
            <person name="Han W."/>
            <person name="Peng X."/>
            <person name="Liu R."/>
            <person name="Wang L."/>
        </authorList>
    </citation>
    <scope>NUCLEOTIDE SEQUENCE [LARGE SCALE GENOMIC DNA]</scope>
    <source>
        <strain>NG80-2</strain>
    </source>
</reference>
<name>PCRB_GEOTN</name>
<accession>A4IJY4</accession>
<dbReference type="EC" id="2.5.1.n9" evidence="1"/>
<dbReference type="EMBL" id="CP000557">
    <property type="protein sequence ID" value="ABO65638.1"/>
    <property type="molecule type" value="Genomic_DNA"/>
</dbReference>
<dbReference type="RefSeq" id="WP_008881452.1">
    <property type="nucleotide sequence ID" value="NC_009328.1"/>
</dbReference>
<dbReference type="SMR" id="A4IJY4"/>
<dbReference type="KEGG" id="gtn:GTNG_0254"/>
<dbReference type="eggNOG" id="COG1646">
    <property type="taxonomic scope" value="Bacteria"/>
</dbReference>
<dbReference type="HOGENOM" id="CLU_095211_0_0_9"/>
<dbReference type="UniPathway" id="UPA00940"/>
<dbReference type="Proteomes" id="UP000001578">
    <property type="component" value="Chromosome"/>
</dbReference>
<dbReference type="GO" id="GO:0120536">
    <property type="term" value="F:heptaprenylglyceryl phosphate synthase activity"/>
    <property type="evidence" value="ECO:0007669"/>
    <property type="project" value="RHEA"/>
</dbReference>
<dbReference type="GO" id="GO:0000287">
    <property type="term" value="F:magnesium ion binding"/>
    <property type="evidence" value="ECO:0007669"/>
    <property type="project" value="UniProtKB-UniRule"/>
</dbReference>
<dbReference type="GO" id="GO:0046474">
    <property type="term" value="P:glycerophospholipid biosynthetic process"/>
    <property type="evidence" value="ECO:0007669"/>
    <property type="project" value="UniProtKB-UniRule"/>
</dbReference>
<dbReference type="CDD" id="cd02812">
    <property type="entry name" value="PcrB_like"/>
    <property type="match status" value="1"/>
</dbReference>
<dbReference type="FunFam" id="3.20.20.390:FF:000001">
    <property type="entry name" value="Heptaprenylglyceryl phosphate synthase"/>
    <property type="match status" value="1"/>
</dbReference>
<dbReference type="Gene3D" id="3.20.20.390">
    <property type="entry name" value="FMN-linked oxidoreductases"/>
    <property type="match status" value="1"/>
</dbReference>
<dbReference type="HAMAP" id="MF_00112">
    <property type="entry name" value="GGGP_HepGP_synthase"/>
    <property type="match status" value="1"/>
</dbReference>
<dbReference type="InterPro" id="IPR039074">
    <property type="entry name" value="GGGP/HepGP_synthase_I"/>
</dbReference>
<dbReference type="InterPro" id="IPR038597">
    <property type="entry name" value="GGGP/HepGP_synthase_sf"/>
</dbReference>
<dbReference type="InterPro" id="IPR008205">
    <property type="entry name" value="GGGP_HepGP_synthase"/>
</dbReference>
<dbReference type="NCBIfam" id="TIGR01768">
    <property type="entry name" value="GGGP-family"/>
    <property type="match status" value="1"/>
</dbReference>
<dbReference type="NCBIfam" id="NF003197">
    <property type="entry name" value="PRK04169.1-1"/>
    <property type="match status" value="1"/>
</dbReference>
<dbReference type="NCBIfam" id="NF003199">
    <property type="entry name" value="PRK04169.1-3"/>
    <property type="match status" value="1"/>
</dbReference>
<dbReference type="PANTHER" id="PTHR40029">
    <property type="match status" value="1"/>
</dbReference>
<dbReference type="PANTHER" id="PTHR40029:SF2">
    <property type="entry name" value="HEPTAPRENYLGLYCERYL PHOSPHATE SYNTHASE"/>
    <property type="match status" value="1"/>
</dbReference>
<dbReference type="Pfam" id="PF01884">
    <property type="entry name" value="PcrB"/>
    <property type="match status" value="1"/>
</dbReference>
<dbReference type="SUPFAM" id="SSF51395">
    <property type="entry name" value="FMN-linked oxidoreductases"/>
    <property type="match status" value="1"/>
</dbReference>
<comment type="function">
    <text evidence="1">Prenyltransferase that catalyzes in vivo the transfer of the heptaprenyl moiety of heptaprenyl pyrophosphate (HepPP; 35 carbon atoms) to the C3 hydroxyl of sn-glycerol-1-phosphate (G1P), producing heptaprenylglyceryl phosphate (HepGP). This reaction is an ether-bond-formation step in the biosynthesis of archaea-type G1P-based membrane lipids found in Bacillales.</text>
</comment>
<comment type="catalytic activity">
    <reaction evidence="1">
        <text>sn-glycerol 1-phosphate + all-trans-heptaprenyl diphosphate = 3-heptaprenyl-sn-glycero-1-phosphate + diphosphate</text>
        <dbReference type="Rhea" id="RHEA:33495"/>
        <dbReference type="ChEBI" id="CHEBI:33019"/>
        <dbReference type="ChEBI" id="CHEBI:57685"/>
        <dbReference type="ChEBI" id="CHEBI:58206"/>
        <dbReference type="ChEBI" id="CHEBI:64781"/>
        <dbReference type="EC" id="2.5.1.n9"/>
    </reaction>
</comment>
<comment type="cofactor">
    <cofactor evidence="1">
        <name>Mg(2+)</name>
        <dbReference type="ChEBI" id="CHEBI:18420"/>
    </cofactor>
</comment>
<comment type="pathway">
    <text evidence="1">Membrane lipid metabolism; glycerophospholipid metabolism.</text>
</comment>
<comment type="subunit">
    <text evidence="1">Homodimer.</text>
</comment>
<comment type="similarity">
    <text evidence="1">Belongs to the GGGP/HepGP synthase family. Group I subfamily.</text>
</comment>